<name>SPX2_LACLA</name>
<comment type="function">
    <text evidence="1">Global transcriptional regulator that plays a key role in stress response and exerts either positive or negative regulation of genes. Acts by interacting with the C-terminal domain of the alpha subunit of the RNA polymerase (RNAP). This interaction can enhance binding of RNAP to the promoter region of target genes and stimulate their transcription, or block interaction of RNAP with activator.</text>
</comment>
<comment type="subunit">
    <text evidence="1">Interacts with the C-terminal domain of the alpha subunit of the RNAP.</text>
</comment>
<comment type="subcellular location">
    <subcellularLocation>
        <location evidence="1">Cytoplasm</location>
    </subcellularLocation>
</comment>
<comment type="similarity">
    <text evidence="1 2">Belongs to the ArsC family. Spx subfamily.</text>
</comment>
<protein>
    <recommendedName>
        <fullName evidence="1">Global transcriptional regulator Spx 2</fullName>
    </recommendedName>
</protein>
<keyword id="KW-0963">Cytoplasm</keyword>
<keyword id="KW-1015">Disulfide bond</keyword>
<keyword id="KW-0676">Redox-active center</keyword>
<keyword id="KW-1185">Reference proteome</keyword>
<keyword id="KW-0804">Transcription</keyword>
<keyword id="KW-0805">Transcription regulation</keyword>
<evidence type="ECO:0000255" key="1">
    <source>
        <dbReference type="HAMAP-Rule" id="MF_01132"/>
    </source>
</evidence>
<evidence type="ECO:0000305" key="2"/>
<reference key="1">
    <citation type="journal article" date="2001" name="Genome Res.">
        <title>The complete genome sequence of the lactic acid bacterium Lactococcus lactis ssp. lactis IL1403.</title>
        <authorList>
            <person name="Bolotin A."/>
            <person name="Wincker P."/>
            <person name="Mauger S."/>
            <person name="Jaillon O."/>
            <person name="Malarme K."/>
            <person name="Weissenbach J."/>
            <person name="Ehrlich S.D."/>
            <person name="Sorokin A."/>
        </authorList>
    </citation>
    <scope>NUCLEOTIDE SEQUENCE [LARGE SCALE GENOMIC DNA]</scope>
    <source>
        <strain>IL1403</strain>
    </source>
</reference>
<reference key="2">
    <citation type="journal article" date="1999" name="Mol. Microbiol.">
        <title>Effects of metabolic flux on stress response pathways in Lactococcus lactis.</title>
        <authorList>
            <person name="Duwat P."/>
            <person name="Ehrlich S.D."/>
            <person name="Gruss A."/>
        </authorList>
    </citation>
    <scope>INVOLVEMENT IN STRESS RESPONSE</scope>
</reference>
<reference key="3">
    <citation type="journal article" date="2001" name="Mol. Microbiol.">
        <title>Inactivation of a gene that is highly conserved in Gram-positive bacteria stimulates degradation of non-native proteins and concomitantly increases stress tolerance in Lactococcus lactis.</title>
        <authorList>
            <person name="Frees D."/>
            <person name="Varmanen P."/>
            <person name="Ingmer H."/>
        </authorList>
    </citation>
    <scope>INVOLVEMENT IN STRESS TOLERANCE</scope>
</reference>
<sequence>MITIYTAPSCTSCKKAKTWLSYHHIPFNERNLIADPLSTTEISQILQKCDDGVEGLISSRNRFVKTLGVDFEDISLSQAIKIISENPQIMRRPIIMDEKRLHVGYNEEEIRAFLPRTVRVLENGGARLRSAI</sequence>
<organism>
    <name type="scientific">Lactococcus lactis subsp. lactis (strain IL1403)</name>
    <name type="common">Streptococcus lactis</name>
    <dbReference type="NCBI Taxonomy" id="272623"/>
    <lineage>
        <taxon>Bacteria</taxon>
        <taxon>Bacillati</taxon>
        <taxon>Bacillota</taxon>
        <taxon>Bacilli</taxon>
        <taxon>Lactobacillales</taxon>
        <taxon>Streptococcaceae</taxon>
        <taxon>Lactococcus</taxon>
    </lineage>
</organism>
<proteinExistence type="inferred from homology"/>
<gene>
    <name evidence="1" type="primary">spx2</name>
    <name type="synonym">spxA2</name>
    <name type="synonym">trmA</name>
    <name type="ordered locus">LL0675</name>
    <name type="ORF">L73853</name>
</gene>
<accession>P60375</accession>
<accession>Q9ETA4</accession>
<dbReference type="EMBL" id="AE005176">
    <property type="protein sequence ID" value="AAK04773.1"/>
    <property type="molecule type" value="Genomic_DNA"/>
</dbReference>
<dbReference type="PIR" id="C86709">
    <property type="entry name" value="C86709"/>
</dbReference>
<dbReference type="RefSeq" id="NP_266831.1">
    <property type="nucleotide sequence ID" value="NC_002662.1"/>
</dbReference>
<dbReference type="SMR" id="P60375"/>
<dbReference type="PaxDb" id="272623-L73853"/>
<dbReference type="EnsemblBacteria" id="AAK04773">
    <property type="protein sequence ID" value="AAK04773"/>
    <property type="gene ID" value="L73853"/>
</dbReference>
<dbReference type="KEGG" id="lla:L73853"/>
<dbReference type="PATRIC" id="fig|272623.7.peg.722"/>
<dbReference type="eggNOG" id="COG1393">
    <property type="taxonomic scope" value="Bacteria"/>
</dbReference>
<dbReference type="HOGENOM" id="CLU_116644_1_1_9"/>
<dbReference type="OrthoDB" id="9794155at2"/>
<dbReference type="Proteomes" id="UP000002196">
    <property type="component" value="Chromosome"/>
</dbReference>
<dbReference type="GO" id="GO:0005737">
    <property type="term" value="C:cytoplasm"/>
    <property type="evidence" value="ECO:0007669"/>
    <property type="project" value="UniProtKB-SubCell"/>
</dbReference>
<dbReference type="GO" id="GO:0045892">
    <property type="term" value="P:negative regulation of DNA-templated transcription"/>
    <property type="evidence" value="ECO:0007669"/>
    <property type="project" value="InterPro"/>
</dbReference>
<dbReference type="CDD" id="cd03032">
    <property type="entry name" value="ArsC_Spx"/>
    <property type="match status" value="1"/>
</dbReference>
<dbReference type="Gene3D" id="3.40.30.10">
    <property type="entry name" value="Glutaredoxin"/>
    <property type="match status" value="1"/>
</dbReference>
<dbReference type="HAMAP" id="MF_01132">
    <property type="entry name" value="Spx"/>
    <property type="match status" value="1"/>
</dbReference>
<dbReference type="InterPro" id="IPR006660">
    <property type="entry name" value="Arsenate_reductase-like"/>
</dbReference>
<dbReference type="InterPro" id="IPR023731">
    <property type="entry name" value="Spx"/>
</dbReference>
<dbReference type="InterPro" id="IPR036249">
    <property type="entry name" value="Thioredoxin-like_sf"/>
</dbReference>
<dbReference type="InterPro" id="IPR006504">
    <property type="entry name" value="Tscrpt_reg_Spx/MgsR"/>
</dbReference>
<dbReference type="NCBIfam" id="TIGR01617">
    <property type="entry name" value="arsC_related"/>
    <property type="match status" value="1"/>
</dbReference>
<dbReference type="NCBIfam" id="NF002459">
    <property type="entry name" value="PRK01655.1"/>
    <property type="match status" value="1"/>
</dbReference>
<dbReference type="NCBIfam" id="NF009885">
    <property type="entry name" value="PRK13344.1"/>
    <property type="match status" value="1"/>
</dbReference>
<dbReference type="PANTHER" id="PTHR30041">
    <property type="entry name" value="ARSENATE REDUCTASE"/>
    <property type="match status" value="1"/>
</dbReference>
<dbReference type="PANTHER" id="PTHR30041:SF7">
    <property type="entry name" value="GLOBAL TRANSCRIPTIONAL REGULATOR SPX"/>
    <property type="match status" value="1"/>
</dbReference>
<dbReference type="Pfam" id="PF03960">
    <property type="entry name" value="ArsC"/>
    <property type="match status" value="1"/>
</dbReference>
<dbReference type="SUPFAM" id="SSF52833">
    <property type="entry name" value="Thioredoxin-like"/>
    <property type="match status" value="1"/>
</dbReference>
<dbReference type="PROSITE" id="PS51353">
    <property type="entry name" value="ARSC"/>
    <property type="match status" value="1"/>
</dbReference>
<feature type="chain" id="PRO_0000162554" description="Global transcriptional regulator Spx 2">
    <location>
        <begin position="1"/>
        <end position="132"/>
    </location>
</feature>
<feature type="disulfide bond" description="Redox-active" evidence="1">
    <location>
        <begin position="10"/>
        <end position="13"/>
    </location>
</feature>